<reference key="1">
    <citation type="submission" date="2001-02" db="EMBL/GenBank/DDBJ databases">
        <title>The role of Corynebacterium glutamicum secretion genes secD, secF and secG in transporting the Streptomyces griseus alpha-amylase.</title>
        <authorList>
            <person name="Berens S."/>
            <person name="Kalinowski J."/>
            <person name="Puehler A."/>
        </authorList>
    </citation>
    <scope>NUCLEOTIDE SEQUENCE [GENOMIC DNA]</scope>
    <source>
        <strain>ATCC 13032 / DSM 20300 / JCM 1318 / BCRC 11384 / CCUG 27702 / LMG 3730 / NBRC 12168 / NCIMB 10025 / NRRL B-2784 / 534</strain>
    </source>
</reference>
<reference key="2">
    <citation type="journal article" date="2003" name="Appl. Microbiol. Biotechnol.">
        <title>The Corynebacterium glutamicum genome: features and impacts on biotechnological processes.</title>
        <authorList>
            <person name="Ikeda M."/>
            <person name="Nakagawa S."/>
        </authorList>
    </citation>
    <scope>NUCLEOTIDE SEQUENCE [LARGE SCALE GENOMIC DNA]</scope>
    <source>
        <strain>ATCC 13032 / DSM 20300 / JCM 1318 / BCRC 11384 / CCUG 27702 / LMG 3730 / NBRC 12168 / NCIMB 10025 / NRRL B-2784 / 534</strain>
    </source>
</reference>
<reference key="3">
    <citation type="journal article" date="2003" name="J. Biotechnol.">
        <title>The complete Corynebacterium glutamicum ATCC 13032 genome sequence and its impact on the production of L-aspartate-derived amino acids and vitamins.</title>
        <authorList>
            <person name="Kalinowski J."/>
            <person name="Bathe B."/>
            <person name="Bartels D."/>
            <person name="Bischoff N."/>
            <person name="Bott M."/>
            <person name="Burkovski A."/>
            <person name="Dusch N."/>
            <person name="Eggeling L."/>
            <person name="Eikmanns B.J."/>
            <person name="Gaigalat L."/>
            <person name="Goesmann A."/>
            <person name="Hartmann M."/>
            <person name="Huthmacher K."/>
            <person name="Kraemer R."/>
            <person name="Linke B."/>
            <person name="McHardy A.C."/>
            <person name="Meyer F."/>
            <person name="Moeckel B."/>
            <person name="Pfefferle W."/>
            <person name="Puehler A."/>
            <person name="Rey D.A."/>
            <person name="Rueckert C."/>
            <person name="Rupp O."/>
            <person name="Sahm H."/>
            <person name="Wendisch V.F."/>
            <person name="Wiegraebe I."/>
            <person name="Tauch A."/>
        </authorList>
    </citation>
    <scope>NUCLEOTIDE SEQUENCE [LARGE SCALE GENOMIC DNA]</scope>
    <source>
        <strain>ATCC 13032 / DSM 20300 / JCM 1318 / BCRC 11384 / CCUG 27702 / LMG 3730 / NBRC 12168 / NCIMB 10025 / NRRL B-2784 / 534</strain>
    </source>
</reference>
<accession>Q8NPZ8</accession>
<accession>Q9AE12</accession>
<name>Y1663_CORGL</name>
<proteinExistence type="inferred from homology"/>
<dbReference type="EMBL" id="AF038651">
    <property type="protein sequence ID" value="AAK19837.1"/>
    <property type="molecule type" value="Genomic_DNA"/>
</dbReference>
<dbReference type="EMBL" id="BA000036">
    <property type="protein sequence ID" value="BAB99056.1"/>
    <property type="molecule type" value="Genomic_DNA"/>
</dbReference>
<dbReference type="EMBL" id="BX927153">
    <property type="protein sequence ID" value="CAF20045.1"/>
    <property type="molecule type" value="Genomic_DNA"/>
</dbReference>
<dbReference type="RefSeq" id="NP_600875.1">
    <property type="nucleotide sequence ID" value="NC_003450.3"/>
</dbReference>
<dbReference type="RefSeq" id="WP_011014520.1">
    <property type="nucleotide sequence ID" value="NC_003450.3"/>
</dbReference>
<dbReference type="RefSeq" id="WP_011265780.1">
    <property type="nucleotide sequence ID" value="NC_006958.1"/>
</dbReference>
<dbReference type="SMR" id="Q8NPZ8"/>
<dbReference type="STRING" id="196627.cg1872"/>
<dbReference type="KEGG" id="cgb:cg1872"/>
<dbReference type="KEGG" id="cgl:Cgl1663"/>
<dbReference type="PATRIC" id="fig|196627.13.peg.1623"/>
<dbReference type="eggNOG" id="COG0217">
    <property type="taxonomic scope" value="Bacteria"/>
</dbReference>
<dbReference type="HOGENOM" id="CLU_062974_2_2_11"/>
<dbReference type="OrthoDB" id="9781053at2"/>
<dbReference type="BioCyc" id="CORYNE:G18NG-11248-MONOMER"/>
<dbReference type="Proteomes" id="UP000000582">
    <property type="component" value="Chromosome"/>
</dbReference>
<dbReference type="Proteomes" id="UP000001009">
    <property type="component" value="Chromosome"/>
</dbReference>
<dbReference type="GO" id="GO:0005829">
    <property type="term" value="C:cytosol"/>
    <property type="evidence" value="ECO:0007669"/>
    <property type="project" value="TreeGrafter"/>
</dbReference>
<dbReference type="GO" id="GO:0003677">
    <property type="term" value="F:DNA binding"/>
    <property type="evidence" value="ECO:0007669"/>
    <property type="project" value="UniProtKB-UniRule"/>
</dbReference>
<dbReference type="GO" id="GO:0006355">
    <property type="term" value="P:regulation of DNA-templated transcription"/>
    <property type="evidence" value="ECO:0007669"/>
    <property type="project" value="UniProtKB-UniRule"/>
</dbReference>
<dbReference type="FunFam" id="1.10.10.200:FF:000002">
    <property type="entry name" value="Probable transcriptional regulatory protein CLM62_37755"/>
    <property type="match status" value="1"/>
</dbReference>
<dbReference type="Gene3D" id="1.10.10.200">
    <property type="match status" value="1"/>
</dbReference>
<dbReference type="Gene3D" id="3.30.70.980">
    <property type="match status" value="2"/>
</dbReference>
<dbReference type="HAMAP" id="MF_00693">
    <property type="entry name" value="Transcrip_reg_TACO1"/>
    <property type="match status" value="1"/>
</dbReference>
<dbReference type="InterPro" id="IPR017856">
    <property type="entry name" value="Integrase-like_N"/>
</dbReference>
<dbReference type="InterPro" id="IPR048300">
    <property type="entry name" value="TACO1_YebC-like_2nd/3rd_dom"/>
</dbReference>
<dbReference type="InterPro" id="IPR049083">
    <property type="entry name" value="TACO1_YebC_N"/>
</dbReference>
<dbReference type="InterPro" id="IPR002876">
    <property type="entry name" value="Transcrip_reg_TACO1-like"/>
</dbReference>
<dbReference type="InterPro" id="IPR026564">
    <property type="entry name" value="Transcrip_reg_TACO1-like_dom3"/>
</dbReference>
<dbReference type="InterPro" id="IPR029072">
    <property type="entry name" value="YebC-like"/>
</dbReference>
<dbReference type="NCBIfam" id="NF001030">
    <property type="entry name" value="PRK00110.1"/>
    <property type="match status" value="1"/>
</dbReference>
<dbReference type="NCBIfam" id="NF009044">
    <property type="entry name" value="PRK12378.1"/>
    <property type="match status" value="1"/>
</dbReference>
<dbReference type="NCBIfam" id="TIGR01033">
    <property type="entry name" value="YebC/PmpR family DNA-binding transcriptional regulator"/>
    <property type="match status" value="1"/>
</dbReference>
<dbReference type="PANTHER" id="PTHR12532:SF6">
    <property type="entry name" value="TRANSCRIPTIONAL REGULATORY PROTEIN YEBC-RELATED"/>
    <property type="match status" value="1"/>
</dbReference>
<dbReference type="PANTHER" id="PTHR12532">
    <property type="entry name" value="TRANSLATIONAL ACTIVATOR OF CYTOCHROME C OXIDASE 1"/>
    <property type="match status" value="1"/>
</dbReference>
<dbReference type="Pfam" id="PF20772">
    <property type="entry name" value="TACO1_YebC_N"/>
    <property type="match status" value="1"/>
</dbReference>
<dbReference type="Pfam" id="PF01709">
    <property type="entry name" value="Transcrip_reg"/>
    <property type="match status" value="1"/>
</dbReference>
<dbReference type="SUPFAM" id="SSF75625">
    <property type="entry name" value="YebC-like"/>
    <property type="match status" value="1"/>
</dbReference>
<gene>
    <name type="ordered locus">Cgl1663</name>
    <name type="ordered locus">cg1872</name>
</gene>
<protein>
    <recommendedName>
        <fullName evidence="1">Probable transcriptional regulatory protein Cgl1663/cg1872</fullName>
    </recommendedName>
</protein>
<organism>
    <name type="scientific">Corynebacterium glutamicum (strain ATCC 13032 / DSM 20300 / JCM 1318 / BCRC 11384 / CCUG 27702 / LMG 3730 / NBRC 12168 / NCIMB 10025 / NRRL B-2784 / 534)</name>
    <dbReference type="NCBI Taxonomy" id="196627"/>
    <lineage>
        <taxon>Bacteria</taxon>
        <taxon>Bacillati</taxon>
        <taxon>Actinomycetota</taxon>
        <taxon>Actinomycetes</taxon>
        <taxon>Mycobacteriales</taxon>
        <taxon>Corynebacteriaceae</taxon>
        <taxon>Corynebacterium</taxon>
    </lineage>
</organism>
<sequence>MSGHSKWATTKHKKAANDAKRGKEFAKLIKNIEVAARTGGGDPSANPTLDDMIKKAKKASVPNDNIERARKRGSGEEAGGADWMNIMYEGYGPNGVAMLIECLTDNRNRAATEVRTAMTKNGGNLGESGSVSYMFTRTGVVTVQKGDLSEDDVLMAVLEAGAEEVNDNGDLFEVTCAPTDIQAVRDALVEAGIEVEDSESDFRASVQVPLDADGARKIFKLVDALEDSDDVQNVYTNIDLSDEVLTELEND</sequence>
<keyword id="KW-0963">Cytoplasm</keyword>
<keyword id="KW-0238">DNA-binding</keyword>
<keyword id="KW-1185">Reference proteome</keyword>
<keyword id="KW-0804">Transcription</keyword>
<keyword id="KW-0805">Transcription regulation</keyword>
<feature type="chain" id="PRO_0000175794" description="Probable transcriptional regulatory protein Cgl1663/cg1872">
    <location>
        <begin position="1"/>
        <end position="251"/>
    </location>
</feature>
<feature type="region of interest" description="Disordered" evidence="2">
    <location>
        <begin position="1"/>
        <end position="22"/>
    </location>
</feature>
<feature type="sequence conflict" description="In Ref. 1 and 3." evidence="3" ref="1 3">
    <original>Q</original>
    <variation>V</variation>
    <location>
        <position position="182"/>
    </location>
</feature>
<feature type="sequence conflict" description="In Ref. 1; AAK19837." evidence="3" ref="1">
    <original>L</original>
    <variation>I</variation>
    <location>
        <position position="188"/>
    </location>
</feature>
<evidence type="ECO:0000255" key="1">
    <source>
        <dbReference type="HAMAP-Rule" id="MF_00693"/>
    </source>
</evidence>
<evidence type="ECO:0000256" key="2">
    <source>
        <dbReference type="SAM" id="MobiDB-lite"/>
    </source>
</evidence>
<evidence type="ECO:0000305" key="3"/>
<comment type="subcellular location">
    <subcellularLocation>
        <location evidence="1">Cytoplasm</location>
    </subcellularLocation>
</comment>
<comment type="similarity">
    <text evidence="1">Belongs to the TACO1 family.</text>
</comment>